<comment type="function">
    <text evidence="1">Catalyzes the transfer of the gamma-phosphate of ATP to D-galactose to form alpha-D-galactose-1-phosphate (Gal-1-P).</text>
</comment>
<comment type="catalytic activity">
    <reaction evidence="1">
        <text>alpha-D-galactose + ATP = alpha-D-galactose 1-phosphate + ADP + H(+)</text>
        <dbReference type="Rhea" id="RHEA:13553"/>
        <dbReference type="ChEBI" id="CHEBI:15378"/>
        <dbReference type="ChEBI" id="CHEBI:28061"/>
        <dbReference type="ChEBI" id="CHEBI:30616"/>
        <dbReference type="ChEBI" id="CHEBI:58336"/>
        <dbReference type="ChEBI" id="CHEBI:456216"/>
        <dbReference type="EC" id="2.7.1.6"/>
    </reaction>
</comment>
<comment type="pathway">
    <text evidence="1">Carbohydrate metabolism; galactose metabolism.</text>
</comment>
<comment type="subcellular location">
    <subcellularLocation>
        <location evidence="1">Cytoplasm</location>
    </subcellularLocation>
</comment>
<comment type="similarity">
    <text evidence="1">Belongs to the GHMP kinase family. GalK subfamily.</text>
</comment>
<reference key="1">
    <citation type="journal article" date="2006" name="Proc. Natl. Acad. Sci. U.S.A.">
        <title>Comparative genomics of the lactic acid bacteria.</title>
        <authorList>
            <person name="Makarova K.S."/>
            <person name="Slesarev A."/>
            <person name="Wolf Y.I."/>
            <person name="Sorokin A."/>
            <person name="Mirkin B."/>
            <person name="Koonin E.V."/>
            <person name="Pavlov A."/>
            <person name="Pavlova N."/>
            <person name="Karamychev V."/>
            <person name="Polouchine N."/>
            <person name="Shakhova V."/>
            <person name="Grigoriev I."/>
            <person name="Lou Y."/>
            <person name="Rohksar D."/>
            <person name="Lucas S."/>
            <person name="Huang K."/>
            <person name="Goodstein D.M."/>
            <person name="Hawkins T."/>
            <person name="Plengvidhya V."/>
            <person name="Welker D."/>
            <person name="Hughes J."/>
            <person name="Goh Y."/>
            <person name="Benson A."/>
            <person name="Baldwin K."/>
            <person name="Lee J.-H."/>
            <person name="Diaz-Muniz I."/>
            <person name="Dosti B."/>
            <person name="Smeianov V."/>
            <person name="Wechter W."/>
            <person name="Barabote R."/>
            <person name="Lorca G."/>
            <person name="Altermann E."/>
            <person name="Barrangou R."/>
            <person name="Ganesan B."/>
            <person name="Xie Y."/>
            <person name="Rawsthorne H."/>
            <person name="Tamir D."/>
            <person name="Parker C."/>
            <person name="Breidt F."/>
            <person name="Broadbent J.R."/>
            <person name="Hutkins R."/>
            <person name="O'Sullivan D."/>
            <person name="Steele J."/>
            <person name="Unlu G."/>
            <person name="Saier M.H. Jr."/>
            <person name="Klaenhammer T."/>
            <person name="Richardson P."/>
            <person name="Kozyavkin S."/>
            <person name="Weimer B.C."/>
            <person name="Mills D.A."/>
        </authorList>
    </citation>
    <scope>NUCLEOTIDE SEQUENCE [LARGE SCALE GENOMIC DNA]</scope>
    <source>
        <strain>ATCC BAA-491 / LMD-9</strain>
    </source>
</reference>
<sequence length="388" mass="43446">MNTSQLREKFKEVFGVEADHTFFSPGRINLIGEHTDYNGGNVLPVAITLGTYGAARKRDDKVLRFFSANFEEKGIIEVPLENLRFENEHNWTNYPKGVLHFLQEAGHTIDSGMDIYIYGNIPNGSGLSSSSSLELLIGVIVEKLYDLKLERLDLVKIGKQTENDFIGVNSGIMDQFAIGMGADQCAIYLDTNTLKYDLVPLDLKDNVVVIMNTNKRRELSDSKYNERRAECETAVSELQEKLDIQTLGELDLWTFDAYSYLIKDENRIKRARHAVLENQRTLQARKALEAGELEGFGRLMNASHVSLKYDYEVTGLELDTLAHTAWEQEGVLGARMTGAGFGGCAIALVNKDKVEDFKKAVGQRYEEVVGYAPSFYIAEVTGGSRVLD</sequence>
<protein>
    <recommendedName>
        <fullName evidence="1">Galactokinase</fullName>
        <ecNumber evidence="1">2.7.1.6</ecNumber>
    </recommendedName>
    <alternativeName>
        <fullName evidence="1">Galactose kinase</fullName>
    </alternativeName>
</protein>
<evidence type="ECO:0000255" key="1">
    <source>
        <dbReference type="HAMAP-Rule" id="MF_00246"/>
    </source>
</evidence>
<organism>
    <name type="scientific">Streptococcus thermophilus (strain ATCC BAA-491 / LMD-9)</name>
    <dbReference type="NCBI Taxonomy" id="322159"/>
    <lineage>
        <taxon>Bacteria</taxon>
        <taxon>Bacillati</taxon>
        <taxon>Bacillota</taxon>
        <taxon>Bacilli</taxon>
        <taxon>Lactobacillales</taxon>
        <taxon>Streptococcaceae</taxon>
        <taxon>Streptococcus</taxon>
    </lineage>
</organism>
<name>GAL1_STRTD</name>
<accession>Q03JS8</accession>
<gene>
    <name evidence="1" type="primary">galK</name>
    <name type="ordered locus">STER_1371</name>
</gene>
<dbReference type="EC" id="2.7.1.6" evidence="1"/>
<dbReference type="EMBL" id="CP000419">
    <property type="protein sequence ID" value="ABJ66544.1"/>
    <property type="molecule type" value="Genomic_DNA"/>
</dbReference>
<dbReference type="RefSeq" id="WP_011681396.1">
    <property type="nucleotide sequence ID" value="NC_008532.1"/>
</dbReference>
<dbReference type="SMR" id="Q03JS8"/>
<dbReference type="KEGG" id="ste:STER_1371"/>
<dbReference type="HOGENOM" id="CLU_017814_2_1_9"/>
<dbReference type="UniPathway" id="UPA00214"/>
<dbReference type="GO" id="GO:0005829">
    <property type="term" value="C:cytosol"/>
    <property type="evidence" value="ECO:0007669"/>
    <property type="project" value="TreeGrafter"/>
</dbReference>
<dbReference type="GO" id="GO:0005524">
    <property type="term" value="F:ATP binding"/>
    <property type="evidence" value="ECO:0007669"/>
    <property type="project" value="UniProtKB-UniRule"/>
</dbReference>
<dbReference type="GO" id="GO:0004335">
    <property type="term" value="F:galactokinase activity"/>
    <property type="evidence" value="ECO:0007669"/>
    <property type="project" value="UniProtKB-UniRule"/>
</dbReference>
<dbReference type="GO" id="GO:0000287">
    <property type="term" value="F:magnesium ion binding"/>
    <property type="evidence" value="ECO:0007669"/>
    <property type="project" value="UniProtKB-UniRule"/>
</dbReference>
<dbReference type="GO" id="GO:0006012">
    <property type="term" value="P:galactose metabolic process"/>
    <property type="evidence" value="ECO:0007669"/>
    <property type="project" value="UniProtKB-UniRule"/>
</dbReference>
<dbReference type="FunFam" id="3.30.230.10:FF:000017">
    <property type="entry name" value="Galactokinase"/>
    <property type="match status" value="1"/>
</dbReference>
<dbReference type="FunFam" id="3.30.70.890:FF:000001">
    <property type="entry name" value="Galactokinase"/>
    <property type="match status" value="1"/>
</dbReference>
<dbReference type="Gene3D" id="3.30.230.10">
    <property type="match status" value="1"/>
</dbReference>
<dbReference type="Gene3D" id="3.30.70.890">
    <property type="entry name" value="GHMP kinase, C-terminal domain"/>
    <property type="match status" value="1"/>
</dbReference>
<dbReference type="HAMAP" id="MF_00246">
    <property type="entry name" value="Galactokinase"/>
    <property type="match status" value="1"/>
</dbReference>
<dbReference type="InterPro" id="IPR000705">
    <property type="entry name" value="Galactokinase"/>
</dbReference>
<dbReference type="InterPro" id="IPR022963">
    <property type="entry name" value="Galactokinase_bac"/>
</dbReference>
<dbReference type="InterPro" id="IPR019741">
    <property type="entry name" value="Galactokinase_CS"/>
</dbReference>
<dbReference type="InterPro" id="IPR019539">
    <property type="entry name" value="GalKase_N"/>
</dbReference>
<dbReference type="InterPro" id="IPR013750">
    <property type="entry name" value="GHMP_kinase_C_dom"/>
</dbReference>
<dbReference type="InterPro" id="IPR036554">
    <property type="entry name" value="GHMP_kinase_C_sf"/>
</dbReference>
<dbReference type="InterPro" id="IPR006204">
    <property type="entry name" value="GHMP_kinase_N_dom"/>
</dbReference>
<dbReference type="InterPro" id="IPR006203">
    <property type="entry name" value="GHMP_knse_ATP-bd_CS"/>
</dbReference>
<dbReference type="InterPro" id="IPR006206">
    <property type="entry name" value="Mevalonate/galactokinase"/>
</dbReference>
<dbReference type="InterPro" id="IPR020568">
    <property type="entry name" value="Ribosomal_Su5_D2-typ_SF"/>
</dbReference>
<dbReference type="InterPro" id="IPR014721">
    <property type="entry name" value="Ribsml_uS5_D2-typ_fold_subgr"/>
</dbReference>
<dbReference type="NCBIfam" id="TIGR00131">
    <property type="entry name" value="gal_kin"/>
    <property type="match status" value="1"/>
</dbReference>
<dbReference type="NCBIfam" id="NF003705">
    <property type="entry name" value="PRK05322.1"/>
    <property type="match status" value="1"/>
</dbReference>
<dbReference type="PANTHER" id="PTHR10457:SF7">
    <property type="entry name" value="GALACTOKINASE-RELATED"/>
    <property type="match status" value="1"/>
</dbReference>
<dbReference type="PANTHER" id="PTHR10457">
    <property type="entry name" value="MEVALONATE KINASE/GALACTOKINASE"/>
    <property type="match status" value="1"/>
</dbReference>
<dbReference type="Pfam" id="PF10509">
    <property type="entry name" value="GalKase_gal_bdg"/>
    <property type="match status" value="1"/>
</dbReference>
<dbReference type="Pfam" id="PF08544">
    <property type="entry name" value="GHMP_kinases_C"/>
    <property type="match status" value="1"/>
</dbReference>
<dbReference type="Pfam" id="PF00288">
    <property type="entry name" value="GHMP_kinases_N"/>
    <property type="match status" value="1"/>
</dbReference>
<dbReference type="PIRSF" id="PIRSF000530">
    <property type="entry name" value="Galactokinase"/>
    <property type="match status" value="1"/>
</dbReference>
<dbReference type="PRINTS" id="PR00473">
    <property type="entry name" value="GALCTOKINASE"/>
</dbReference>
<dbReference type="PRINTS" id="PR00959">
    <property type="entry name" value="MEVGALKINASE"/>
</dbReference>
<dbReference type="SUPFAM" id="SSF55060">
    <property type="entry name" value="GHMP Kinase, C-terminal domain"/>
    <property type="match status" value="1"/>
</dbReference>
<dbReference type="SUPFAM" id="SSF54211">
    <property type="entry name" value="Ribosomal protein S5 domain 2-like"/>
    <property type="match status" value="1"/>
</dbReference>
<dbReference type="PROSITE" id="PS00106">
    <property type="entry name" value="GALACTOKINASE"/>
    <property type="match status" value="1"/>
</dbReference>
<dbReference type="PROSITE" id="PS00627">
    <property type="entry name" value="GHMP_KINASES_ATP"/>
    <property type="match status" value="1"/>
</dbReference>
<proteinExistence type="inferred from homology"/>
<feature type="chain" id="PRO_1000005768" description="Galactokinase">
    <location>
        <begin position="1"/>
        <end position="388"/>
    </location>
</feature>
<feature type="active site" description="Proton acceptor" evidence="1">
    <location>
        <position position="174"/>
    </location>
</feature>
<feature type="binding site" evidence="1">
    <location>
        <begin position="33"/>
        <end position="36"/>
    </location>
    <ligand>
        <name>substrate</name>
    </ligand>
</feature>
<feature type="binding site" evidence="1">
    <location>
        <position position="67"/>
    </location>
    <ligand>
        <name>ATP</name>
        <dbReference type="ChEBI" id="CHEBI:30616"/>
    </ligand>
</feature>
<feature type="binding site" evidence="1">
    <location>
        <begin position="124"/>
        <end position="130"/>
    </location>
    <ligand>
        <name>ATP</name>
        <dbReference type="ChEBI" id="CHEBI:30616"/>
    </ligand>
</feature>
<feature type="binding site" evidence="1">
    <location>
        <position position="130"/>
    </location>
    <ligand>
        <name>Mg(2+)</name>
        <dbReference type="ChEBI" id="CHEBI:18420"/>
    </ligand>
</feature>
<feature type="binding site" evidence="1">
    <location>
        <position position="162"/>
    </location>
    <ligand>
        <name>Mg(2+)</name>
        <dbReference type="ChEBI" id="CHEBI:18420"/>
    </ligand>
</feature>
<feature type="binding site" evidence="1">
    <location>
        <position position="224"/>
    </location>
    <ligand>
        <name>substrate</name>
    </ligand>
</feature>
<feature type="site" description="Transition state stabilizer" evidence="1">
    <location>
        <position position="27"/>
    </location>
</feature>
<keyword id="KW-0067">ATP-binding</keyword>
<keyword id="KW-0119">Carbohydrate metabolism</keyword>
<keyword id="KW-0963">Cytoplasm</keyword>
<keyword id="KW-0299">Galactose metabolism</keyword>
<keyword id="KW-0418">Kinase</keyword>
<keyword id="KW-0460">Magnesium</keyword>
<keyword id="KW-0479">Metal-binding</keyword>
<keyword id="KW-0547">Nucleotide-binding</keyword>
<keyword id="KW-0808">Transferase</keyword>